<evidence type="ECO:0000250" key="1"/>
<evidence type="ECO:0000250" key="2">
    <source>
        <dbReference type="UniProtKB" id="Q8N1G2"/>
    </source>
</evidence>
<evidence type="ECO:0000250" key="3">
    <source>
        <dbReference type="UniProtKB" id="Q9DBC3"/>
    </source>
</evidence>
<evidence type="ECO:0000255" key="4">
    <source>
        <dbReference type="PROSITE-ProRule" id="PRU00092"/>
    </source>
</evidence>
<evidence type="ECO:0000255" key="5">
    <source>
        <dbReference type="PROSITE-ProRule" id="PRU00224"/>
    </source>
</evidence>
<evidence type="ECO:0000255" key="6">
    <source>
        <dbReference type="PROSITE-ProRule" id="PRU00768"/>
    </source>
</evidence>
<evidence type="ECO:0000255" key="7">
    <source>
        <dbReference type="PROSITE-ProRule" id="PRU00945"/>
    </source>
</evidence>
<evidence type="ECO:0000256" key="8">
    <source>
        <dbReference type="SAM" id="MobiDB-lite"/>
    </source>
</evidence>
<accession>D2HRF1</accession>
<dbReference type="EC" id="2.1.1.57" evidence="2"/>
<dbReference type="EMBL" id="GL193218">
    <property type="protein sequence ID" value="EFB19601.1"/>
    <property type="molecule type" value="Genomic_DNA"/>
</dbReference>
<dbReference type="RefSeq" id="XP_002925128.1">
    <property type="nucleotide sequence ID" value="XM_002925082.4"/>
</dbReference>
<dbReference type="SMR" id="D2HRF1"/>
<dbReference type="STRING" id="9646.ENSAMEP00000016193"/>
<dbReference type="Ensembl" id="ENSAMET00000016867.2">
    <property type="protein sequence ID" value="ENSAMEP00000016193.2"/>
    <property type="gene ID" value="ENSAMEG00000015322.2"/>
</dbReference>
<dbReference type="GeneID" id="100464010"/>
<dbReference type="KEGG" id="aml:100464010"/>
<dbReference type="CTD" id="23070"/>
<dbReference type="eggNOG" id="KOG3673">
    <property type="taxonomic scope" value="Eukaryota"/>
</dbReference>
<dbReference type="InParanoid" id="D2HRF1"/>
<dbReference type="OrthoDB" id="10251234at2759"/>
<dbReference type="Proteomes" id="UP000008912">
    <property type="component" value="Unassembled WGS sequence"/>
</dbReference>
<dbReference type="GO" id="GO:0005737">
    <property type="term" value="C:cytoplasm"/>
    <property type="evidence" value="ECO:0007669"/>
    <property type="project" value="TreeGrafter"/>
</dbReference>
<dbReference type="GO" id="GO:0005654">
    <property type="term" value="C:nucleoplasm"/>
    <property type="evidence" value="ECO:0007669"/>
    <property type="project" value="Ensembl"/>
</dbReference>
<dbReference type="GO" id="GO:0005634">
    <property type="term" value="C:nucleus"/>
    <property type="evidence" value="ECO:0000250"/>
    <property type="project" value="UniProtKB"/>
</dbReference>
<dbReference type="GO" id="GO:0004483">
    <property type="term" value="F:mRNA (nucleoside-2'-O-)-methyltransferase activity"/>
    <property type="evidence" value="ECO:0000250"/>
    <property type="project" value="UniProtKB"/>
</dbReference>
<dbReference type="GO" id="GO:0003676">
    <property type="term" value="F:nucleic acid binding"/>
    <property type="evidence" value="ECO:0007669"/>
    <property type="project" value="InterPro"/>
</dbReference>
<dbReference type="GO" id="GO:0006370">
    <property type="term" value="P:7-methylguanosine mRNA capping"/>
    <property type="evidence" value="ECO:0000250"/>
    <property type="project" value="UniProtKB"/>
</dbReference>
<dbReference type="GO" id="GO:0032259">
    <property type="term" value="P:methylation"/>
    <property type="evidence" value="ECO:0007669"/>
    <property type="project" value="UniProtKB-KW"/>
</dbReference>
<dbReference type="GO" id="GO:0006397">
    <property type="term" value="P:mRNA processing"/>
    <property type="evidence" value="ECO:0000250"/>
    <property type="project" value="UniProtKB"/>
</dbReference>
<dbReference type="FunFam" id="3.30.470.30:FF:000006">
    <property type="entry name" value="Cap methyltransferase 1"/>
    <property type="match status" value="1"/>
</dbReference>
<dbReference type="FunFam" id="3.40.50.12760:FF:000001">
    <property type="entry name" value="Cap methyltransferase 1"/>
    <property type="match status" value="1"/>
</dbReference>
<dbReference type="Gene3D" id="3.40.50.12760">
    <property type="match status" value="1"/>
</dbReference>
<dbReference type="Gene3D" id="3.30.470.30">
    <property type="entry name" value="DNA ligase/mRNA capping enzyme"/>
    <property type="match status" value="1"/>
</dbReference>
<dbReference type="InterPro" id="IPR000467">
    <property type="entry name" value="G_patch_dom"/>
</dbReference>
<dbReference type="InterPro" id="IPR050851">
    <property type="entry name" value="mRNA_Cap_2O-Ribose_MeTrfase"/>
</dbReference>
<dbReference type="InterPro" id="IPR002877">
    <property type="entry name" value="RNA_MeTrfase_FtsJ_dom"/>
</dbReference>
<dbReference type="InterPro" id="IPR025816">
    <property type="entry name" value="RrmJ-type_MeTrfase"/>
</dbReference>
<dbReference type="InterPro" id="IPR029063">
    <property type="entry name" value="SAM-dependent_MTases_sf"/>
</dbReference>
<dbReference type="InterPro" id="IPR001202">
    <property type="entry name" value="WW_dom"/>
</dbReference>
<dbReference type="PANTHER" id="PTHR16121:SF0">
    <property type="entry name" value="CAP-SPECIFIC MRNA (NUCLEOSIDE-2'-O-)-METHYLTRANSFERASE 1"/>
    <property type="match status" value="1"/>
</dbReference>
<dbReference type="PANTHER" id="PTHR16121">
    <property type="entry name" value="CAP-SPECIFIC MRNA (NUCLEOSIDE-2'-O-)-METHYLTRANSFERASE 1-RELATED"/>
    <property type="match status" value="1"/>
</dbReference>
<dbReference type="Pfam" id="PF01728">
    <property type="entry name" value="FtsJ"/>
    <property type="match status" value="1"/>
</dbReference>
<dbReference type="Pfam" id="PF01585">
    <property type="entry name" value="G-patch"/>
    <property type="match status" value="1"/>
</dbReference>
<dbReference type="SMART" id="SM00443">
    <property type="entry name" value="G_patch"/>
    <property type="match status" value="1"/>
</dbReference>
<dbReference type="SMART" id="SM00456">
    <property type="entry name" value="WW"/>
    <property type="match status" value="1"/>
</dbReference>
<dbReference type="SUPFAM" id="SSF53335">
    <property type="entry name" value="S-adenosyl-L-methionine-dependent methyltransferases"/>
    <property type="match status" value="1"/>
</dbReference>
<dbReference type="PROSITE" id="PS50174">
    <property type="entry name" value="G_PATCH"/>
    <property type="match status" value="1"/>
</dbReference>
<dbReference type="PROSITE" id="PS51613">
    <property type="entry name" value="SAM_MT_RRMJ"/>
    <property type="match status" value="1"/>
</dbReference>
<dbReference type="PROSITE" id="PS01159">
    <property type="entry name" value="WW_DOMAIN_1"/>
    <property type="match status" value="1"/>
</dbReference>
<reference key="1">
    <citation type="journal article" date="2010" name="Nature">
        <title>The sequence and de novo assembly of the giant panda genome.</title>
        <authorList>
            <person name="Li R."/>
            <person name="Fan W."/>
            <person name="Tian G."/>
            <person name="Zhu H."/>
            <person name="He L."/>
            <person name="Cai J."/>
            <person name="Huang Q."/>
            <person name="Cai Q."/>
            <person name="Li B."/>
            <person name="Bai Y."/>
            <person name="Zhang Z."/>
            <person name="Zhang Y."/>
            <person name="Wang W."/>
            <person name="Li J."/>
            <person name="Wei F."/>
            <person name="Li H."/>
            <person name="Jian M."/>
            <person name="Li J."/>
            <person name="Zhang Z."/>
            <person name="Nielsen R."/>
            <person name="Li D."/>
            <person name="Gu W."/>
            <person name="Yang Z."/>
            <person name="Xuan Z."/>
            <person name="Ryder O.A."/>
            <person name="Leung F.C."/>
            <person name="Zhou Y."/>
            <person name="Cao J."/>
            <person name="Sun X."/>
            <person name="Fu Y."/>
            <person name="Fang X."/>
            <person name="Guo X."/>
            <person name="Wang B."/>
            <person name="Hou R."/>
            <person name="Shen F."/>
            <person name="Mu B."/>
            <person name="Ni P."/>
            <person name="Lin R."/>
            <person name="Qian W."/>
            <person name="Wang G."/>
            <person name="Yu C."/>
            <person name="Nie W."/>
            <person name="Wang J."/>
            <person name="Wu Z."/>
            <person name="Liang H."/>
            <person name="Min J."/>
            <person name="Wu Q."/>
            <person name="Cheng S."/>
            <person name="Ruan J."/>
            <person name="Wang M."/>
            <person name="Shi Z."/>
            <person name="Wen M."/>
            <person name="Liu B."/>
            <person name="Ren X."/>
            <person name="Zheng H."/>
            <person name="Dong D."/>
            <person name="Cook K."/>
            <person name="Shan G."/>
            <person name="Zhang H."/>
            <person name="Kosiol C."/>
            <person name="Xie X."/>
            <person name="Lu Z."/>
            <person name="Zheng H."/>
            <person name="Li Y."/>
            <person name="Steiner C.C."/>
            <person name="Lam T.T."/>
            <person name="Lin S."/>
            <person name="Zhang Q."/>
            <person name="Li G."/>
            <person name="Tian J."/>
            <person name="Gong T."/>
            <person name="Liu H."/>
            <person name="Zhang D."/>
            <person name="Fang L."/>
            <person name="Ye C."/>
            <person name="Zhang J."/>
            <person name="Hu W."/>
            <person name="Xu A."/>
            <person name="Ren Y."/>
            <person name="Zhang G."/>
            <person name="Bruford M.W."/>
            <person name="Li Q."/>
            <person name="Ma L."/>
            <person name="Guo Y."/>
            <person name="An N."/>
            <person name="Hu Y."/>
            <person name="Zheng Y."/>
            <person name="Shi Y."/>
            <person name="Li Z."/>
            <person name="Liu Q."/>
            <person name="Chen Y."/>
            <person name="Zhao J."/>
            <person name="Qu N."/>
            <person name="Zhao S."/>
            <person name="Tian F."/>
            <person name="Wang X."/>
            <person name="Wang H."/>
            <person name="Xu L."/>
            <person name="Liu X."/>
            <person name="Vinar T."/>
            <person name="Wang Y."/>
            <person name="Lam T.W."/>
            <person name="Yiu S.M."/>
            <person name="Liu S."/>
            <person name="Zhang H."/>
            <person name="Li D."/>
            <person name="Huang Y."/>
            <person name="Wang X."/>
            <person name="Yang G."/>
            <person name="Jiang Z."/>
            <person name="Wang J."/>
            <person name="Qin N."/>
            <person name="Li L."/>
            <person name="Li J."/>
            <person name="Bolund L."/>
            <person name="Kristiansen K."/>
            <person name="Wong G.K."/>
            <person name="Olson M."/>
            <person name="Zhang X."/>
            <person name="Li S."/>
            <person name="Yang H."/>
            <person name="Wang J."/>
            <person name="Wang J."/>
        </authorList>
    </citation>
    <scope>NUCLEOTIDE SEQUENCE [LARGE SCALE GENOMIC DNA]</scope>
</reference>
<comment type="function">
    <text evidence="2">S-adenosyl-L-methionine-dependent methyltransferase that mediates mRNA cap1 2'-O-ribose methylation to the 5'-cap structure of mRNAs. Methylates the ribose of the first nucleotide of a m(7)GpppG-capped mRNA and small nuclear RNA (snRNA) to produce m(7)GpppRm (cap1). Displays a preference for cap0 transcripts. Cap1 modification is linked to higher levels of translation. May be involved in the interferon response pathway.</text>
</comment>
<comment type="catalytic activity">
    <reaction evidence="2">
        <text>a 5'-end (N(7)-methyl 5'-triphosphoguanosine)-ribonucleoside in mRNA + S-adenosyl-L-methionine = a 5'-end (N(7)-methyl 5'-triphosphoguanosine)-(2'-O-methyl-ribonucleoside) in mRNA + S-adenosyl-L-homocysteine + H(+)</text>
        <dbReference type="Rhea" id="RHEA:67020"/>
        <dbReference type="Rhea" id="RHEA-COMP:17167"/>
        <dbReference type="Rhea" id="RHEA-COMP:17168"/>
        <dbReference type="ChEBI" id="CHEBI:15378"/>
        <dbReference type="ChEBI" id="CHEBI:57856"/>
        <dbReference type="ChEBI" id="CHEBI:59789"/>
        <dbReference type="ChEBI" id="CHEBI:156461"/>
        <dbReference type="ChEBI" id="CHEBI:167609"/>
        <dbReference type="EC" id="2.1.1.57"/>
    </reaction>
</comment>
<comment type="subunit">
    <text evidence="2">Interacts with POLR2A (via C-terminus).</text>
</comment>
<comment type="subcellular location">
    <subcellularLocation>
        <location evidence="2">Nucleus</location>
    </subcellularLocation>
</comment>
<gene>
    <name type="primary">CMTR1</name>
    <name type="synonym">FTSJD2</name>
    <name type="ORF">PANDA_014567</name>
</gene>
<name>CMTR1_AILME</name>
<feature type="chain" id="PRO_0000399797" description="Cap-specific mRNA (nucleoside-2'-O-)-methyltransferase 1">
    <location>
        <begin position="1"/>
        <end position="835"/>
    </location>
</feature>
<feature type="domain" description="G-patch" evidence="4">
    <location>
        <begin position="87"/>
        <end position="133"/>
    </location>
</feature>
<feature type="domain" description="RrmJ-type SAM-dependent 2'-O-MTase" evidence="7">
    <location>
        <begin position="231"/>
        <end position="450"/>
    </location>
</feature>
<feature type="domain" description="WW" evidence="5">
    <location>
        <begin position="752"/>
        <end position="786"/>
    </location>
</feature>
<feature type="region of interest" description="Disordered" evidence="8">
    <location>
        <begin position="24"/>
        <end position="68"/>
    </location>
</feature>
<feature type="region of interest" description="Interaction with POLR2A" evidence="1">
    <location>
        <begin position="727"/>
        <end position="835"/>
    </location>
</feature>
<feature type="short sequence motif" description="Bipartite nuclear localization signal" evidence="6">
    <location>
        <begin position="2"/>
        <end position="19"/>
    </location>
</feature>
<feature type="compositionally biased region" description="Polar residues" evidence="8">
    <location>
        <begin position="37"/>
        <end position="54"/>
    </location>
</feature>
<feature type="compositionally biased region" description="Basic and acidic residues" evidence="8">
    <location>
        <begin position="57"/>
        <end position="68"/>
    </location>
</feature>
<feature type="active site" evidence="2">
    <location>
        <position position="239"/>
    </location>
</feature>
<feature type="active site" evidence="2">
    <location>
        <position position="364"/>
    </location>
</feature>
<feature type="active site" description="Proton acceptor" evidence="7">
    <location>
        <position position="404"/>
    </location>
</feature>
<feature type="binding site" evidence="2">
    <location>
        <begin position="203"/>
        <end position="207"/>
    </location>
    <ligand>
        <name>substrate</name>
    </ligand>
</feature>
<feature type="binding site" evidence="2">
    <location>
        <position position="218"/>
    </location>
    <ligand>
        <name>substrate</name>
    </ligand>
</feature>
<feature type="binding site" evidence="2">
    <location>
        <position position="234"/>
    </location>
    <ligand>
        <name>S-adenosyl-L-methionine</name>
        <dbReference type="ChEBI" id="CHEBI:59789"/>
    </ligand>
</feature>
<feature type="binding site" evidence="2">
    <location>
        <begin position="277"/>
        <end position="283"/>
    </location>
    <ligand>
        <name>S-adenosyl-L-methionine</name>
        <dbReference type="ChEBI" id="CHEBI:59789"/>
    </ligand>
</feature>
<feature type="binding site" evidence="2">
    <location>
        <begin position="335"/>
        <end position="336"/>
    </location>
    <ligand>
        <name>S-adenosyl-L-methionine</name>
        <dbReference type="ChEBI" id="CHEBI:59789"/>
    </ligand>
</feature>
<feature type="binding site" evidence="2">
    <location>
        <begin position="374"/>
        <end position="376"/>
    </location>
    <ligand>
        <name>substrate</name>
    </ligand>
</feature>
<feature type="binding site" evidence="2">
    <location>
        <position position="439"/>
    </location>
    <ligand>
        <name>substrate</name>
    </ligand>
</feature>
<feature type="modified residue" description="Phosphoserine" evidence="3">
    <location>
        <position position="28"/>
    </location>
</feature>
<feature type="modified residue" description="Phosphoserine" evidence="3">
    <location>
        <position position="31"/>
    </location>
</feature>
<feature type="modified residue" description="Phosphoserine" evidence="2">
    <location>
        <position position="53"/>
    </location>
</feature>
<feature type="modified residue" description="Phosphoserine" evidence="2">
    <location>
        <position position="66"/>
    </location>
</feature>
<feature type="modified residue" description="Phosphoserine" evidence="2">
    <location>
        <position position="91"/>
    </location>
</feature>
<feature type="modified residue" description="N6-acetyllysine" evidence="2">
    <location>
        <position position="108"/>
    </location>
</feature>
<organism>
    <name type="scientific">Ailuropoda melanoleuca</name>
    <name type="common">Giant panda</name>
    <dbReference type="NCBI Taxonomy" id="9646"/>
    <lineage>
        <taxon>Eukaryota</taxon>
        <taxon>Metazoa</taxon>
        <taxon>Chordata</taxon>
        <taxon>Craniata</taxon>
        <taxon>Vertebrata</taxon>
        <taxon>Euteleostomi</taxon>
        <taxon>Mammalia</taxon>
        <taxon>Eutheria</taxon>
        <taxon>Laurasiatheria</taxon>
        <taxon>Carnivora</taxon>
        <taxon>Caniformia</taxon>
        <taxon>Ursidae</taxon>
        <taxon>Ailuropoda</taxon>
    </lineage>
</organism>
<sequence length="835" mass="94950">MRRRNDPECTAPIKKQKKRVAELALNLSAASGDEPPSSVNHAAKASTTSLSGSDSETEGKQHGSDSFDDAFKADSLVEGTSSRYSMYNSVSQKLMAKMGFREGEGLGKYSQGRKDIVEASNQKGRRGLGLTLQGFDQELNVDWRDEPEPSACEQVSWFPECTTEIPDTQEMSDWMVVGKRKMVIEDETEFCGEELLHSVLQCKSVFDVLDGDEMRRARTRANPYEMIRGVFFLNRAAMKMANMDFVFDRMFTNPRDSCGKPLVKDREAELLYFADVCAGPGGFSEYVLWRKKWHAKGFGMTLKGPNDFKLEDFYSASSELFEPYYGEGGIDGDGDITRPENITAFRNFVLDNTDRKGVHFLMADGGFSVEGQENLQEILSKQLLLCQFLMALSVVRTGGHFICKTFDLFTPFSAGLIYLLYCCFERVCLFKPITSRPANSERYVVCKGLKVGIDDVRDYLFAVNIKLNQLHNTDSDVSLVVPLEVIKGDHEFTDYMIRSNESHCSLQIKALAKIHAFVQDTTLSEPRQAEIRKECLRLWGIPDQARVAPSSSDPKSKFFELIQGTEIDIFSYKPTLLTSKTLEKIRPVLDYRCMVSGSEQKFLIGLGKSQIYTWDGRQSDRWVKLDLKTELPRDTLLSVEIVHELKGEGKAQRKISAIHILDVLVLNGSDVREQHFNQRIQLAEKFVKAVSKPSRPDMNPIRVKEVYRLEEMEKIFVRLEMKIIKGSSGTPKLSYTGRDDRHFVPTGLYIVRTVNEPWTMGFSKSFKRKFFYNKKTKISTFDLPADSIAPFHICYYGRLFWEWGDGIRVHDSQKPQDPDKLSKEDVLSFIQTHSA</sequence>
<keyword id="KW-0007">Acetylation</keyword>
<keyword id="KW-0489">Methyltransferase</keyword>
<keyword id="KW-0506">mRNA capping</keyword>
<keyword id="KW-0507">mRNA processing</keyword>
<keyword id="KW-0539">Nucleus</keyword>
<keyword id="KW-0597">Phosphoprotein</keyword>
<keyword id="KW-1185">Reference proteome</keyword>
<keyword id="KW-0949">S-adenosyl-L-methionine</keyword>
<keyword id="KW-0808">Transferase</keyword>
<proteinExistence type="inferred from homology"/>
<protein>
    <recommendedName>
        <fullName>Cap-specific mRNA (nucleoside-2'-O-)-methyltransferase 1</fullName>
        <ecNumber evidence="2">2.1.1.57</ecNumber>
    </recommendedName>
    <alternativeName>
        <fullName>Cap methyltransferase 1</fullName>
    </alternativeName>
    <alternativeName>
        <fullName>Cap1 2'O-ribose methyltransferase 1</fullName>
        <shortName>MTr1</shortName>
    </alternativeName>
    <alternativeName>
        <fullName>FtsJ methyltransferase domain-containing protein 2</fullName>
    </alternativeName>
</protein>